<reference key="1">
    <citation type="journal article" date="1994" name="J. Bacteriol.">
        <title>AggR, a transcriptional activator of aggregative adherence fimbria I expression in enteroaggregative Escherichia coli.</title>
        <authorList>
            <person name="Nataro J.P."/>
            <person name="Yikang D."/>
            <person name="Yingkang D."/>
            <person name="Walker K."/>
        </authorList>
    </citation>
    <scope>NUCLEOTIDE SEQUENCE [GENOMIC DNA]</scope>
    <scope>FUNCTION</scope>
    <scope>DISRUPTION PHENOTYPE</scope>
    <source>
        <strain>O3:H2 / 17-2 / EAggEC</strain>
    </source>
</reference>
<organism>
    <name type="scientific">Escherichia coli</name>
    <dbReference type="NCBI Taxonomy" id="562"/>
    <lineage>
        <taxon>Bacteria</taxon>
        <taxon>Pseudomonadati</taxon>
        <taxon>Pseudomonadota</taxon>
        <taxon>Gammaproteobacteria</taxon>
        <taxon>Enterobacterales</taxon>
        <taxon>Enterobacteriaceae</taxon>
        <taxon>Escherichia</taxon>
    </lineage>
</organism>
<dbReference type="EMBL" id="Z32523">
    <property type="protein sequence ID" value="CAA83535.1"/>
    <property type="molecule type" value="Genomic_DNA"/>
</dbReference>
<dbReference type="EMBL" id="Z18751">
    <property type="protein sequence ID" value="CAA79242.1"/>
    <property type="molecule type" value="Genomic_DNA"/>
</dbReference>
<dbReference type="PIR" id="S32735">
    <property type="entry name" value="S32735"/>
</dbReference>
<dbReference type="RefSeq" id="WP_000769457.1">
    <property type="nucleotide sequence ID" value="NZ_WSWO01000087.1"/>
</dbReference>
<dbReference type="RefSeq" id="YP_006940465.1">
    <property type="nucleotide sequence ID" value="NC_019000.1"/>
</dbReference>
<dbReference type="SMR" id="P43464"/>
<dbReference type="OMA" id="FQISHRC"/>
<dbReference type="PHI-base" id="PHI:11912"/>
<dbReference type="PHI-base" id="PHI:9507"/>
<dbReference type="GO" id="GO:0003700">
    <property type="term" value="F:DNA-binding transcription factor activity"/>
    <property type="evidence" value="ECO:0007669"/>
    <property type="project" value="InterPro"/>
</dbReference>
<dbReference type="GO" id="GO:0043565">
    <property type="term" value="F:sequence-specific DNA binding"/>
    <property type="evidence" value="ECO:0007669"/>
    <property type="project" value="InterPro"/>
</dbReference>
<dbReference type="Gene3D" id="1.10.10.60">
    <property type="entry name" value="Homeodomain-like"/>
    <property type="match status" value="1"/>
</dbReference>
<dbReference type="InterPro" id="IPR009057">
    <property type="entry name" value="Homeodomain-like_sf"/>
</dbReference>
<dbReference type="InterPro" id="IPR018060">
    <property type="entry name" value="HTH_AraC"/>
</dbReference>
<dbReference type="InterPro" id="IPR018062">
    <property type="entry name" value="HTH_AraC-typ_CS"/>
</dbReference>
<dbReference type="InterPro" id="IPR020449">
    <property type="entry name" value="Tscrpt_reg_AraC-type_HTH"/>
</dbReference>
<dbReference type="PANTHER" id="PTHR43280">
    <property type="entry name" value="ARAC-FAMILY TRANSCRIPTIONAL REGULATOR"/>
    <property type="match status" value="1"/>
</dbReference>
<dbReference type="PANTHER" id="PTHR43280:SF33">
    <property type="entry name" value="HTH-TYPE TRANSCRIPTIONAL REGULATOR APPY-RELATED"/>
    <property type="match status" value="1"/>
</dbReference>
<dbReference type="Pfam" id="PF12833">
    <property type="entry name" value="HTH_18"/>
    <property type="match status" value="1"/>
</dbReference>
<dbReference type="PRINTS" id="PR00032">
    <property type="entry name" value="HTHARAC"/>
</dbReference>
<dbReference type="SMART" id="SM00342">
    <property type="entry name" value="HTH_ARAC"/>
    <property type="match status" value="1"/>
</dbReference>
<dbReference type="SUPFAM" id="SSF46689">
    <property type="entry name" value="Homeodomain-like"/>
    <property type="match status" value="1"/>
</dbReference>
<dbReference type="PROSITE" id="PS00041">
    <property type="entry name" value="HTH_ARAC_FAMILY_1"/>
    <property type="match status" value="1"/>
</dbReference>
<dbReference type="PROSITE" id="PS01124">
    <property type="entry name" value="HTH_ARAC_FAMILY_2"/>
    <property type="match status" value="1"/>
</dbReference>
<accession>P43464</accession>
<keyword id="KW-0010">Activator</keyword>
<keyword id="KW-0238">DNA-binding</keyword>
<keyword id="KW-0614">Plasmid</keyword>
<keyword id="KW-0804">Transcription</keyword>
<keyword id="KW-0805">Transcription regulation</keyword>
<protein>
    <recommendedName>
        <fullName evidence="4">Transcriptional activator AggR</fullName>
    </recommendedName>
    <alternativeName>
        <fullName>AAF/I regulatory protein</fullName>
    </alternativeName>
</protein>
<gene>
    <name type="primary">aggR</name>
</gene>
<feature type="chain" id="PRO_0000194496" description="Transcriptional activator AggR">
    <location>
        <begin position="1"/>
        <end position="265"/>
    </location>
</feature>
<feature type="domain" description="HTH araC/xylS-type" evidence="2">
    <location>
        <begin position="164"/>
        <end position="261"/>
    </location>
</feature>
<feature type="DNA-binding region" description="H-T-H motif" evidence="2">
    <location>
        <begin position="181"/>
        <end position="202"/>
    </location>
</feature>
<feature type="DNA-binding region" description="H-T-H motif" evidence="2">
    <location>
        <begin position="228"/>
        <end position="251"/>
    </location>
</feature>
<comment type="function">
    <text evidence="3">Transcriptional activator of aggregative adherence fimbria I expression in enteroaggregative E.coli.</text>
</comment>
<comment type="subunit">
    <text evidence="1">Homodimer.</text>
</comment>
<comment type="disruption phenotype">
    <text evidence="3">Loss of autoagglutination, hemagglutination and aggregative adherence to human epithelial HEp-2 cells, loss of aggregative adherence fimbria I expression.</text>
</comment>
<comment type="miscellaneous">
    <text evidence="3">Encoded on an unnamed 60MDa plasmid.</text>
</comment>
<proteinExistence type="inferred from homology"/>
<sequence length="265" mass="30690">MKLKQNIEKEIIKINNIRIHQYTVLYTSNCTIDVYTKEGSNTYLRNELIFLERGINISVRLQKKKSTVNPFIAIRLSSDTLRRLKDALMIIYGISKVDACSCPNWSKGIIVADADDSVLDTFKSIDHNDDSRITSDLIYLISKIENNRKIIESIYISAVSFFSDKVRNTIEKDLSKRWTLAIIADEFNVSEITIRKRLESEYITFNQILMQSRMSKAALLLLDNSYQISQISNMIGFSSTSYFIRLFVKHFGITPKQFLTYFKSQ</sequence>
<geneLocation type="plasmid">
    <name>unnamed</name>
</geneLocation>
<name>AGGR_ECOLX</name>
<evidence type="ECO:0000250" key="1">
    <source>
        <dbReference type="UniProtKB" id="P16114"/>
    </source>
</evidence>
<evidence type="ECO:0000255" key="2">
    <source>
        <dbReference type="PROSITE-ProRule" id="PRU00593"/>
    </source>
</evidence>
<evidence type="ECO:0000269" key="3">
    <source>
    </source>
</evidence>
<evidence type="ECO:0000303" key="4">
    <source>
    </source>
</evidence>